<protein>
    <recommendedName>
        <fullName evidence="6">Cholesteryl ester transfer protein</fullName>
    </recommendedName>
    <alternativeName>
        <fullName evidence="7">Lipid transfer protein I</fullName>
    </alternativeName>
</protein>
<sequence length="493" mass="54743">MLAATVLTLALLGNVHACSKGTSHKAGIVCRITKPALLVLNQETAKVIQSAFQRANYPNITGEKAMMLLGQVKYGLHNIQISHLSIASSRVELVEAKSIDVSIQNVSVVFKGTLKYGYTTAWGLGIDQSVDFEIDSAIDLQINTQLTCDSGRVRTDAPDCYLSFHKLLLHLQGEREPGWIKQLFTNFISFTLKLVLKGQICKEINIISNIMADFVQTRAASILSDGDIGVDISLTGDPIITASYLESHHKGYFIYKNVSEDLPLPTFSPALLGDSRMLYFWFSEQVFHSLAKVAFQDGRLMLSLMGDEFKAVLETWGFNTNQEIFQEVVGGFPSQAQVTVHCLKMPRISCQNKGVVVNSSVMVKFLFPRPDQQHSVAYTFEEDIMTTVQASYSKKKLFLSLLDFQITPKTVSNLTESSSESVQSFLQSMITTVGIPEVMSRLEAVFTALMNSKGLSLFDIINPEIITRDGFLLLQMDFGFPEHLLVDFLQSLS</sequence>
<feature type="signal peptide" evidence="1">
    <location>
        <begin position="1"/>
        <end position="17"/>
    </location>
</feature>
<feature type="chain" id="PRO_0000017156" description="Cholesteryl ester transfer protein">
    <location>
        <begin position="18"/>
        <end position="493"/>
    </location>
</feature>
<feature type="glycosylation site" description="N-linked (GlcNAc...) asparagine" evidence="3">
    <location>
        <position position="59"/>
    </location>
</feature>
<feature type="glycosylation site" description="N-linked (GlcNAc...) asparagine" evidence="3">
    <location>
        <position position="105"/>
    </location>
</feature>
<feature type="glycosylation site" description="N-linked (GlcNAc...) asparagine" evidence="3">
    <location>
        <position position="257"/>
    </location>
</feature>
<feature type="glycosylation site" description="N-linked (GlcNAc...) asparagine" evidence="3">
    <location>
        <position position="358"/>
    </location>
</feature>
<feature type="glycosylation site" description="N-linked (GlcNAc...) asparagine" evidence="3">
    <location>
        <position position="413"/>
    </location>
</feature>
<feature type="disulfide bond" evidence="2">
    <location>
        <begin position="160"/>
        <end position="201"/>
    </location>
</feature>
<name>CETP_MACFA</name>
<keyword id="KW-0153">Cholesterol metabolism</keyword>
<keyword id="KW-1015">Disulfide bond</keyword>
<keyword id="KW-0325">Glycoprotein</keyword>
<keyword id="KW-0443">Lipid metabolism</keyword>
<keyword id="KW-0445">Lipid transport</keyword>
<keyword id="KW-1185">Reference proteome</keyword>
<keyword id="KW-0964">Secreted</keyword>
<keyword id="KW-0732">Signal</keyword>
<keyword id="KW-0753">Steroid metabolism</keyword>
<keyword id="KW-1207">Sterol metabolism</keyword>
<keyword id="KW-0813">Transport</keyword>
<evidence type="ECO:0000250" key="1"/>
<evidence type="ECO:0000250" key="2">
    <source>
        <dbReference type="UniProtKB" id="P11597"/>
    </source>
</evidence>
<evidence type="ECO:0000255" key="3"/>
<evidence type="ECO:0000269" key="4">
    <source>
    </source>
</evidence>
<evidence type="ECO:0000269" key="5">
    <source>
    </source>
</evidence>
<evidence type="ECO:0000303" key="6">
    <source>
    </source>
</evidence>
<evidence type="ECO:0000305" key="7"/>
<accession>P47896</accession>
<organism>
    <name type="scientific">Macaca fascicularis</name>
    <name type="common">Crab-eating macaque</name>
    <name type="synonym">Cynomolgus monkey</name>
    <dbReference type="NCBI Taxonomy" id="9541"/>
    <lineage>
        <taxon>Eukaryota</taxon>
        <taxon>Metazoa</taxon>
        <taxon>Chordata</taxon>
        <taxon>Craniata</taxon>
        <taxon>Vertebrata</taxon>
        <taxon>Euteleostomi</taxon>
        <taxon>Mammalia</taxon>
        <taxon>Eutheria</taxon>
        <taxon>Euarchontoglires</taxon>
        <taxon>Primates</taxon>
        <taxon>Haplorrhini</taxon>
        <taxon>Catarrhini</taxon>
        <taxon>Cercopithecidae</taxon>
        <taxon>Cercopithecinae</taxon>
        <taxon>Macaca</taxon>
    </lineage>
</organism>
<gene>
    <name evidence="6" type="primary">CETP</name>
</gene>
<dbReference type="EMBL" id="M86343">
    <property type="protein sequence ID" value="AAA36840.1"/>
    <property type="molecule type" value="mRNA"/>
</dbReference>
<dbReference type="PIR" id="A53176">
    <property type="entry name" value="A53176"/>
</dbReference>
<dbReference type="SMR" id="P47896"/>
<dbReference type="STRING" id="9541.ENSMFAP00000039968"/>
<dbReference type="SwissLipids" id="SLP:000000486"/>
<dbReference type="GlyCosmos" id="P47896">
    <property type="glycosylation" value="5 sites, No reported glycans"/>
</dbReference>
<dbReference type="eggNOG" id="KOG4160">
    <property type="taxonomic scope" value="Eukaryota"/>
</dbReference>
<dbReference type="Proteomes" id="UP000233100">
    <property type="component" value="Unplaced"/>
</dbReference>
<dbReference type="GO" id="GO:0005615">
    <property type="term" value="C:extracellular space"/>
    <property type="evidence" value="ECO:0000314"/>
    <property type="project" value="UniProtKB"/>
</dbReference>
<dbReference type="GO" id="GO:0034364">
    <property type="term" value="C:high-density lipoprotein particle"/>
    <property type="evidence" value="ECO:0007669"/>
    <property type="project" value="InterPro"/>
</dbReference>
<dbReference type="GO" id="GO:0015485">
    <property type="term" value="F:cholesterol binding"/>
    <property type="evidence" value="ECO:0007669"/>
    <property type="project" value="TreeGrafter"/>
</dbReference>
<dbReference type="GO" id="GO:0120020">
    <property type="term" value="F:cholesterol transfer activity"/>
    <property type="evidence" value="ECO:0000314"/>
    <property type="project" value="UniProtKB"/>
</dbReference>
<dbReference type="GO" id="GO:0031210">
    <property type="term" value="F:phosphatidylcholine binding"/>
    <property type="evidence" value="ECO:0007669"/>
    <property type="project" value="TreeGrafter"/>
</dbReference>
<dbReference type="GO" id="GO:0005548">
    <property type="term" value="F:phospholipid transporter activity"/>
    <property type="evidence" value="ECO:0007669"/>
    <property type="project" value="TreeGrafter"/>
</dbReference>
<dbReference type="GO" id="GO:0017129">
    <property type="term" value="F:triglyceride binding"/>
    <property type="evidence" value="ECO:0007669"/>
    <property type="project" value="TreeGrafter"/>
</dbReference>
<dbReference type="GO" id="GO:0042632">
    <property type="term" value="P:cholesterol homeostasis"/>
    <property type="evidence" value="ECO:0007669"/>
    <property type="project" value="TreeGrafter"/>
</dbReference>
<dbReference type="GO" id="GO:0008203">
    <property type="term" value="P:cholesterol metabolic process"/>
    <property type="evidence" value="ECO:0007669"/>
    <property type="project" value="UniProtKB-KW"/>
</dbReference>
<dbReference type="GO" id="GO:0030301">
    <property type="term" value="P:cholesterol transport"/>
    <property type="evidence" value="ECO:0000314"/>
    <property type="project" value="UniProtKB"/>
</dbReference>
<dbReference type="GO" id="GO:0034375">
    <property type="term" value="P:high-density lipoprotein particle remodeling"/>
    <property type="evidence" value="ECO:0000314"/>
    <property type="project" value="UniProtKB"/>
</dbReference>
<dbReference type="GO" id="GO:0034374">
    <property type="term" value="P:low-density lipoprotein particle remodeling"/>
    <property type="evidence" value="ECO:0007669"/>
    <property type="project" value="TreeGrafter"/>
</dbReference>
<dbReference type="GO" id="GO:0046470">
    <property type="term" value="P:phosphatidylcholine metabolic process"/>
    <property type="evidence" value="ECO:0007669"/>
    <property type="project" value="TreeGrafter"/>
</dbReference>
<dbReference type="GO" id="GO:0055091">
    <property type="term" value="P:phospholipid homeostasis"/>
    <property type="evidence" value="ECO:0007669"/>
    <property type="project" value="TreeGrafter"/>
</dbReference>
<dbReference type="GO" id="GO:0043691">
    <property type="term" value="P:reverse cholesterol transport"/>
    <property type="evidence" value="ECO:0007669"/>
    <property type="project" value="InterPro"/>
</dbReference>
<dbReference type="GO" id="GO:0070328">
    <property type="term" value="P:triglyceride homeostasis"/>
    <property type="evidence" value="ECO:0007669"/>
    <property type="project" value="TreeGrafter"/>
</dbReference>
<dbReference type="GO" id="GO:0006641">
    <property type="term" value="P:triglyceride metabolic process"/>
    <property type="evidence" value="ECO:0007669"/>
    <property type="project" value="TreeGrafter"/>
</dbReference>
<dbReference type="GO" id="GO:0034197">
    <property type="term" value="P:triglyceride transport"/>
    <property type="evidence" value="ECO:0000314"/>
    <property type="project" value="UniProtKB"/>
</dbReference>
<dbReference type="GO" id="GO:0034372">
    <property type="term" value="P:very-low-density lipoprotein particle remodeling"/>
    <property type="evidence" value="ECO:0000314"/>
    <property type="project" value="UniProtKB"/>
</dbReference>
<dbReference type="CDD" id="cd00025">
    <property type="entry name" value="BPI1"/>
    <property type="match status" value="1"/>
</dbReference>
<dbReference type="FunFam" id="3.15.10.10:FF:000002">
    <property type="entry name" value="Cholesteryl ester transfer protein"/>
    <property type="match status" value="1"/>
</dbReference>
<dbReference type="FunFam" id="3.15.20.10:FF:000002">
    <property type="entry name" value="Cholesteryl ester transfer protein"/>
    <property type="match status" value="1"/>
</dbReference>
<dbReference type="Gene3D" id="3.15.10.10">
    <property type="entry name" value="Bactericidal permeability-increasing protein, domain 1"/>
    <property type="match status" value="1"/>
</dbReference>
<dbReference type="Gene3D" id="3.15.20.10">
    <property type="entry name" value="Bactericidal permeability-increasing protein, domain 2"/>
    <property type="match status" value="1"/>
</dbReference>
<dbReference type="InterPro" id="IPR017943">
    <property type="entry name" value="Bactericidal_perm-incr_a/b_dom"/>
</dbReference>
<dbReference type="InterPro" id="IPR017130">
    <property type="entry name" value="Cholesteryl_ester_transfer"/>
</dbReference>
<dbReference type="InterPro" id="IPR001124">
    <property type="entry name" value="Lipid-bd_serum_glycop_C"/>
</dbReference>
<dbReference type="InterPro" id="IPR017954">
    <property type="entry name" value="Lipid-bd_serum_glycop_CS"/>
</dbReference>
<dbReference type="InterPro" id="IPR017942">
    <property type="entry name" value="Lipid-bd_serum_glycop_N"/>
</dbReference>
<dbReference type="PANTHER" id="PTHR47616">
    <property type="entry name" value="CHOLESTERYL ESTER TRANSFER PROTEIN"/>
    <property type="match status" value="1"/>
</dbReference>
<dbReference type="PANTHER" id="PTHR47616:SF1">
    <property type="entry name" value="CHOLESTERYL ESTER TRANSFER PROTEIN"/>
    <property type="match status" value="1"/>
</dbReference>
<dbReference type="Pfam" id="PF01273">
    <property type="entry name" value="LBP_BPI_CETP"/>
    <property type="match status" value="1"/>
</dbReference>
<dbReference type="Pfam" id="PF02886">
    <property type="entry name" value="LBP_BPI_CETP_C"/>
    <property type="match status" value="1"/>
</dbReference>
<dbReference type="PIRSF" id="PIRSF037185">
    <property type="entry name" value="Cholesteryl_ester_transf"/>
    <property type="match status" value="1"/>
</dbReference>
<dbReference type="SMART" id="SM00328">
    <property type="entry name" value="BPI1"/>
    <property type="match status" value="1"/>
</dbReference>
<dbReference type="SMART" id="SM00329">
    <property type="entry name" value="BPI2"/>
    <property type="match status" value="1"/>
</dbReference>
<dbReference type="SUPFAM" id="SSF55394">
    <property type="entry name" value="Bactericidal permeability-increasing protein, BPI"/>
    <property type="match status" value="2"/>
</dbReference>
<dbReference type="PROSITE" id="PS00400">
    <property type="entry name" value="LBP_BPI_CETP"/>
    <property type="match status" value="1"/>
</dbReference>
<comment type="function">
    <text evidence="2 5">Involved in the transfer of neutral lipids, including cholesteryl ester and triglyceride, among lipoprotein particles. Allows the net movement of cholesteryl ester from high density lipoproteins/HDL to triglyceride-rich very low density lipoproteins/VLDL, and the equimolar transport of triglyceride from VLDL to HDL (PubMed:24293641). Regulates the reverse cholesterol transport, by which excess cholesterol is removed from peripheral tissues and returned to the liver for elimination (By similarity).</text>
</comment>
<comment type="catalytic activity">
    <reaction evidence="5">
        <text>cholesteryl (9Z-octadecenoate)(in) = cholesteryl (9Z-octadecenoate)(out)</text>
        <dbReference type="Rhea" id="RHEA:43348"/>
        <dbReference type="ChEBI" id="CHEBI:46898"/>
    </reaction>
</comment>
<comment type="catalytic activity">
    <reaction evidence="5">
        <text>1,2,3-tri-(9Z-octadecenoyl)-glycerol(in) = 1,2,3-tri-(9Z-octadecenoyl)-glycerol(out)</text>
        <dbReference type="Rhea" id="RHEA:43352"/>
        <dbReference type="ChEBI" id="CHEBI:53753"/>
    </reaction>
</comment>
<comment type="catalytic activity">
    <reaction evidence="2">
        <text>cholesteryl (9Z,12Z)-octadecadienoate(in) = cholesteryl (9Z,12Z)-octadecadienoate(out)</text>
        <dbReference type="Rhea" id="RHEA:43356"/>
        <dbReference type="ChEBI" id="CHEBI:41509"/>
    </reaction>
</comment>
<comment type="subcellular location">
    <subcellularLocation>
        <location evidence="5 6">Secreted</location>
    </subcellularLocation>
    <text evidence="6">Secreted in plasma.</text>
</comment>
<comment type="tissue specificity">
    <text evidence="4">Probably primarily expressed in liver and adipose tissues. Detected in adrenal gland, mesenteric fat, spleen and aorta.</text>
</comment>
<comment type="induction">
    <text evidence="4">Up-regulated by high-fat, high-cholesterol diet.</text>
</comment>
<comment type="similarity">
    <text evidence="7">Belongs to the BPI/LBP/Plunc superfamily. BPI/LBP family.</text>
</comment>
<proteinExistence type="evidence at protein level"/>
<reference key="1">
    <citation type="journal article" date="1991" name="Arterioscler. Thromb.">
        <title>Molecular cloning, sequence, and expression of cynomolgus monkey cholesteryl ester transfer protein. Inverse correlation between hepatic cholesteryl ester transfer protein mRNA levels and plasma high density lipoprotein levels.</title>
        <authorList>
            <person name="Pape M.E."/>
            <person name="Rehberg E.F."/>
            <person name="Marotti K.R."/>
            <person name="Melchior G.W."/>
        </authorList>
    </citation>
    <scope>NUCLEOTIDE SEQUENCE [MRNA]</scope>
    <scope>SUBCELLULAR LOCATION</scope>
    <scope>TISSUE SPECIFICITY</scope>
    <scope>INDUCTION</scope>
</reference>
<reference key="2">
    <citation type="journal article" date="2014" name="J. Lipid Res.">
        <title>Cholesteryl ester transfer proteins from different species do not have equivalent activities.</title>
        <authorList>
            <person name="Morton R.E."/>
            <person name="Izem L."/>
        </authorList>
    </citation>
    <scope>FUNCTION</scope>
    <scope>SUBCELLULAR LOCATION</scope>
    <scope>CATALYTIC ACTIVITY</scope>
</reference>